<organism>
    <name type="scientific">Tropheryma whipplei (strain TW08/27)</name>
    <name type="common">Whipple's bacillus</name>
    <dbReference type="NCBI Taxonomy" id="218496"/>
    <lineage>
        <taxon>Bacteria</taxon>
        <taxon>Bacillati</taxon>
        <taxon>Actinomycetota</taxon>
        <taxon>Actinomycetes</taxon>
        <taxon>Micrococcales</taxon>
        <taxon>Tropherymataceae</taxon>
        <taxon>Tropheryma</taxon>
    </lineage>
</organism>
<keyword id="KW-1003">Cell membrane</keyword>
<keyword id="KW-0472">Membrane</keyword>
<reference key="1">
    <citation type="journal article" date="2003" name="Lancet">
        <title>Sequencing and analysis of the genome of the Whipple's disease bacterium Tropheryma whipplei.</title>
        <authorList>
            <person name="Bentley S.D."/>
            <person name="Maiwald M."/>
            <person name="Murphy L.D."/>
            <person name="Pallen M.J."/>
            <person name="Yeats C.A."/>
            <person name="Dover L.G."/>
            <person name="Norbertczak H.T."/>
            <person name="Besra G.S."/>
            <person name="Quail M.A."/>
            <person name="Harris D.E."/>
            <person name="von Herbay A."/>
            <person name="Goble A."/>
            <person name="Rutter S."/>
            <person name="Squares R."/>
            <person name="Squares S."/>
            <person name="Barrell B.G."/>
            <person name="Parkhill J."/>
            <person name="Relman D.A."/>
        </authorList>
    </citation>
    <scope>NUCLEOTIDE SEQUENCE [LARGE SCALE GENOMIC DNA]</scope>
    <source>
        <strain>TW08/27</strain>
    </source>
</reference>
<feature type="chain" id="PRO_0000171893" description="Putative membrane protein insertion efficiency factor">
    <location>
        <begin position="1"/>
        <end position="92"/>
    </location>
</feature>
<dbReference type="EMBL" id="BX251412">
    <property type="protein sequence ID" value="CAD67475.1"/>
    <property type="molecule type" value="Genomic_DNA"/>
</dbReference>
<dbReference type="GeneID" id="67388596"/>
<dbReference type="KEGG" id="tws:TW816"/>
<dbReference type="HOGENOM" id="CLU_144811_5_0_11"/>
<dbReference type="GO" id="GO:0005886">
    <property type="term" value="C:plasma membrane"/>
    <property type="evidence" value="ECO:0007669"/>
    <property type="project" value="UniProtKB-SubCell"/>
</dbReference>
<dbReference type="HAMAP" id="MF_00386">
    <property type="entry name" value="UPF0161_YidD"/>
    <property type="match status" value="1"/>
</dbReference>
<dbReference type="InterPro" id="IPR002696">
    <property type="entry name" value="Membr_insert_effic_factor_YidD"/>
</dbReference>
<dbReference type="NCBIfam" id="TIGR00278">
    <property type="entry name" value="membrane protein insertion efficiency factor YidD"/>
    <property type="match status" value="1"/>
</dbReference>
<dbReference type="PANTHER" id="PTHR33383">
    <property type="entry name" value="MEMBRANE PROTEIN INSERTION EFFICIENCY FACTOR-RELATED"/>
    <property type="match status" value="1"/>
</dbReference>
<dbReference type="PANTHER" id="PTHR33383:SF1">
    <property type="entry name" value="MEMBRANE PROTEIN INSERTION EFFICIENCY FACTOR-RELATED"/>
    <property type="match status" value="1"/>
</dbReference>
<dbReference type="Pfam" id="PF01809">
    <property type="entry name" value="YidD"/>
    <property type="match status" value="1"/>
</dbReference>
<dbReference type="SMART" id="SM01234">
    <property type="entry name" value="Haemolytic"/>
    <property type="match status" value="1"/>
</dbReference>
<accession>Q83H58</accession>
<proteinExistence type="inferred from homology"/>
<comment type="function">
    <text evidence="1">Could be involved in insertion of integral membrane proteins into the membrane.</text>
</comment>
<comment type="subcellular location">
    <subcellularLocation>
        <location evidence="1">Cell membrane</location>
        <topology evidence="1">Peripheral membrane protein</topology>
        <orientation evidence="1">Cytoplasmic side</orientation>
    </subcellularLocation>
</comment>
<comment type="similarity">
    <text evidence="1">Belongs to the UPF0161 family.</text>
</comment>
<gene>
    <name type="ordered locus">TW816</name>
</gene>
<evidence type="ECO:0000255" key="1">
    <source>
        <dbReference type="HAMAP-Rule" id="MF_00386"/>
    </source>
</evidence>
<protein>
    <recommendedName>
        <fullName evidence="1">Putative membrane protein insertion efficiency factor</fullName>
    </recommendedName>
</protein>
<sequence length="92" mass="10600">MLRIVPRNIFILFIIAYRKIISPMYGPVCKYYPSCSEYCQNSIANNGVFLGAAYTFMRLVRCNPWSKGGVDMPRVSTKYRVNKFGFASRKNV</sequence>
<name>YIDD_TROW8</name>